<comment type="subunit">
    <text evidence="1">Part of the 50S ribosomal subunit. Contacts protein L32.</text>
</comment>
<comment type="similarity">
    <text evidence="1">Belongs to the bacterial ribosomal protein bL17 family.</text>
</comment>
<dbReference type="EMBL" id="AP008229">
    <property type="protein sequence ID" value="BAE70117.1"/>
    <property type="molecule type" value="Genomic_DNA"/>
</dbReference>
<dbReference type="RefSeq" id="WP_003486665.1">
    <property type="nucleotide sequence ID" value="NC_007705.1"/>
</dbReference>
<dbReference type="SMR" id="Q2P010"/>
<dbReference type="GeneID" id="97509361"/>
<dbReference type="KEGG" id="xom:XOO3362"/>
<dbReference type="HOGENOM" id="CLU_074407_2_0_6"/>
<dbReference type="GO" id="GO:0022625">
    <property type="term" value="C:cytosolic large ribosomal subunit"/>
    <property type="evidence" value="ECO:0007669"/>
    <property type="project" value="TreeGrafter"/>
</dbReference>
<dbReference type="GO" id="GO:0003735">
    <property type="term" value="F:structural constituent of ribosome"/>
    <property type="evidence" value="ECO:0007669"/>
    <property type="project" value="InterPro"/>
</dbReference>
<dbReference type="GO" id="GO:0006412">
    <property type="term" value="P:translation"/>
    <property type="evidence" value="ECO:0007669"/>
    <property type="project" value="UniProtKB-UniRule"/>
</dbReference>
<dbReference type="FunFam" id="3.90.1030.10:FF:000001">
    <property type="entry name" value="50S ribosomal protein L17"/>
    <property type="match status" value="1"/>
</dbReference>
<dbReference type="Gene3D" id="3.90.1030.10">
    <property type="entry name" value="Ribosomal protein L17"/>
    <property type="match status" value="1"/>
</dbReference>
<dbReference type="HAMAP" id="MF_01368">
    <property type="entry name" value="Ribosomal_bL17"/>
    <property type="match status" value="1"/>
</dbReference>
<dbReference type="InterPro" id="IPR000456">
    <property type="entry name" value="Ribosomal_bL17"/>
</dbReference>
<dbReference type="InterPro" id="IPR047859">
    <property type="entry name" value="Ribosomal_bL17_CS"/>
</dbReference>
<dbReference type="InterPro" id="IPR036373">
    <property type="entry name" value="Ribosomal_bL17_sf"/>
</dbReference>
<dbReference type="NCBIfam" id="TIGR00059">
    <property type="entry name" value="L17"/>
    <property type="match status" value="1"/>
</dbReference>
<dbReference type="PANTHER" id="PTHR14413:SF16">
    <property type="entry name" value="LARGE RIBOSOMAL SUBUNIT PROTEIN BL17M"/>
    <property type="match status" value="1"/>
</dbReference>
<dbReference type="PANTHER" id="PTHR14413">
    <property type="entry name" value="RIBOSOMAL PROTEIN L17"/>
    <property type="match status" value="1"/>
</dbReference>
<dbReference type="Pfam" id="PF01196">
    <property type="entry name" value="Ribosomal_L17"/>
    <property type="match status" value="1"/>
</dbReference>
<dbReference type="SUPFAM" id="SSF64263">
    <property type="entry name" value="Prokaryotic ribosomal protein L17"/>
    <property type="match status" value="1"/>
</dbReference>
<dbReference type="PROSITE" id="PS01167">
    <property type="entry name" value="RIBOSOMAL_L17"/>
    <property type="match status" value="1"/>
</dbReference>
<proteinExistence type="inferred from homology"/>
<keyword id="KW-0687">Ribonucleoprotein</keyword>
<keyword id="KW-0689">Ribosomal protein</keyword>
<feature type="chain" id="PRO_0000267972" description="Large ribosomal subunit protein bL17">
    <location>
        <begin position="1"/>
        <end position="127"/>
    </location>
</feature>
<protein>
    <recommendedName>
        <fullName evidence="1">Large ribosomal subunit protein bL17</fullName>
    </recommendedName>
    <alternativeName>
        <fullName evidence="2">50S ribosomal protein L17</fullName>
    </alternativeName>
</protein>
<accession>Q2P010</accession>
<organism>
    <name type="scientific">Xanthomonas oryzae pv. oryzae (strain MAFF 311018)</name>
    <dbReference type="NCBI Taxonomy" id="342109"/>
    <lineage>
        <taxon>Bacteria</taxon>
        <taxon>Pseudomonadati</taxon>
        <taxon>Pseudomonadota</taxon>
        <taxon>Gammaproteobacteria</taxon>
        <taxon>Lysobacterales</taxon>
        <taxon>Lysobacteraceae</taxon>
        <taxon>Xanthomonas</taxon>
    </lineage>
</organism>
<sequence>MRHQKSGRKFNRTSAHREAMFRNMAASLFKHELIKTTLPKAKELRRVAEPLITIGKVDGVANRRLAFARLRDKEAVGKLFVELGPRYATRPGGYLRILKAGFRAGDNAPMAYVELVDRPVVAEEVAE</sequence>
<evidence type="ECO:0000255" key="1">
    <source>
        <dbReference type="HAMAP-Rule" id="MF_01368"/>
    </source>
</evidence>
<evidence type="ECO:0000305" key="2"/>
<reference key="1">
    <citation type="journal article" date="2005" name="Jpn. Agric. Res. Q.">
        <title>Genome sequence of Xanthomonas oryzae pv. oryzae suggests contribution of large numbers of effector genes and insertion sequences to its race diversity.</title>
        <authorList>
            <person name="Ochiai H."/>
            <person name="Inoue Y."/>
            <person name="Takeya M."/>
            <person name="Sasaki A."/>
            <person name="Kaku H."/>
        </authorList>
    </citation>
    <scope>NUCLEOTIDE SEQUENCE [LARGE SCALE GENOMIC DNA]</scope>
    <source>
        <strain>MAFF 311018</strain>
    </source>
</reference>
<name>RL17_XANOM</name>
<gene>
    <name evidence="1" type="primary">rplQ</name>
    <name type="ordered locus">XOO3362</name>
</gene>